<organism>
    <name type="scientific">Aethionema grandiflorum</name>
    <name type="common">Persian stone-cress</name>
    <dbReference type="NCBI Taxonomy" id="72657"/>
    <lineage>
        <taxon>Eukaryota</taxon>
        <taxon>Viridiplantae</taxon>
        <taxon>Streptophyta</taxon>
        <taxon>Embryophyta</taxon>
        <taxon>Tracheophyta</taxon>
        <taxon>Spermatophyta</taxon>
        <taxon>Magnoliopsida</taxon>
        <taxon>eudicotyledons</taxon>
        <taxon>Gunneridae</taxon>
        <taxon>Pentapetalae</taxon>
        <taxon>rosids</taxon>
        <taxon>malvids</taxon>
        <taxon>Brassicales</taxon>
        <taxon>Brassicaceae</taxon>
        <taxon>Aethionemeae</taxon>
        <taxon>Aethionema</taxon>
    </lineage>
</organism>
<geneLocation type="chloroplast"/>
<keyword id="KW-0150">Chloroplast</keyword>
<keyword id="KW-0934">Plastid</keyword>
<keyword id="KW-0687">Ribonucleoprotein</keyword>
<keyword id="KW-0689">Ribosomal protein</keyword>
<feature type="chain" id="PRO_0000296605" description="Large ribosomal subunit protein bL32c">
    <location>
        <begin position="1"/>
        <end position="52"/>
    </location>
</feature>
<evidence type="ECO:0000255" key="1">
    <source>
        <dbReference type="HAMAP-Rule" id="MF_00340"/>
    </source>
</evidence>
<evidence type="ECO:0000305" key="2"/>
<accession>A4QJP8</accession>
<gene>
    <name evidence="1" type="primary">rpl32</name>
</gene>
<proteinExistence type="inferred from homology"/>
<protein>
    <recommendedName>
        <fullName evidence="1">Large ribosomal subunit protein bL32c</fullName>
    </recommendedName>
    <alternativeName>
        <fullName evidence="2">50S ribosomal protein L32, chloroplastic</fullName>
    </alternativeName>
</protein>
<name>RK32_AETGR</name>
<sequence>MAVPKKRTSISKKRIRKQIWKRKGYWISLKAFSLGKSLSTGNSKSFFVQQNK</sequence>
<dbReference type="EMBL" id="AP009367">
    <property type="protein sequence ID" value="BAF49903.1"/>
    <property type="molecule type" value="Genomic_DNA"/>
</dbReference>
<dbReference type="RefSeq" id="YP_001123078.1">
    <property type="nucleotide sequence ID" value="NC_009266.1"/>
</dbReference>
<dbReference type="SMR" id="A4QJP8"/>
<dbReference type="GeneID" id="4962318"/>
<dbReference type="GO" id="GO:0009507">
    <property type="term" value="C:chloroplast"/>
    <property type="evidence" value="ECO:0007669"/>
    <property type="project" value="UniProtKB-SubCell"/>
</dbReference>
<dbReference type="GO" id="GO:0015934">
    <property type="term" value="C:large ribosomal subunit"/>
    <property type="evidence" value="ECO:0007669"/>
    <property type="project" value="InterPro"/>
</dbReference>
<dbReference type="GO" id="GO:0003735">
    <property type="term" value="F:structural constituent of ribosome"/>
    <property type="evidence" value="ECO:0007669"/>
    <property type="project" value="InterPro"/>
</dbReference>
<dbReference type="GO" id="GO:0006412">
    <property type="term" value="P:translation"/>
    <property type="evidence" value="ECO:0007669"/>
    <property type="project" value="UniProtKB-UniRule"/>
</dbReference>
<dbReference type="HAMAP" id="MF_00340">
    <property type="entry name" value="Ribosomal_bL32"/>
    <property type="match status" value="1"/>
</dbReference>
<dbReference type="InterPro" id="IPR002677">
    <property type="entry name" value="Ribosomal_bL32"/>
</dbReference>
<dbReference type="InterPro" id="IPR044958">
    <property type="entry name" value="Ribosomal_bL32_plant/cyanobact"/>
</dbReference>
<dbReference type="InterPro" id="IPR011332">
    <property type="entry name" value="Ribosomal_zn-bd"/>
</dbReference>
<dbReference type="PANTHER" id="PTHR36083">
    <property type="entry name" value="50S RIBOSOMAL PROTEIN L32, CHLOROPLASTIC"/>
    <property type="match status" value="1"/>
</dbReference>
<dbReference type="PANTHER" id="PTHR36083:SF1">
    <property type="entry name" value="LARGE RIBOSOMAL SUBUNIT PROTEIN BL32C"/>
    <property type="match status" value="1"/>
</dbReference>
<dbReference type="Pfam" id="PF01783">
    <property type="entry name" value="Ribosomal_L32p"/>
    <property type="match status" value="1"/>
</dbReference>
<dbReference type="SUPFAM" id="SSF57829">
    <property type="entry name" value="Zn-binding ribosomal proteins"/>
    <property type="match status" value="1"/>
</dbReference>
<comment type="subcellular location">
    <subcellularLocation>
        <location>Plastid</location>
        <location>Chloroplast</location>
    </subcellularLocation>
</comment>
<comment type="similarity">
    <text evidence="1">Belongs to the bacterial ribosomal protein bL32 family.</text>
</comment>
<reference key="1">
    <citation type="submission" date="2007-03" db="EMBL/GenBank/DDBJ databases">
        <title>Sequencing analysis of Aethionema grandiflorum chloroplast DNA.</title>
        <authorList>
            <person name="Hosouchi T."/>
            <person name="Tsuruoka H."/>
            <person name="Kotani H."/>
        </authorList>
    </citation>
    <scope>NUCLEOTIDE SEQUENCE [LARGE SCALE GENOMIC DNA]</scope>
</reference>